<name>DCUP_NOCSJ</name>
<evidence type="ECO:0000255" key="1">
    <source>
        <dbReference type="HAMAP-Rule" id="MF_00218"/>
    </source>
</evidence>
<accession>A1SMY9</accession>
<dbReference type="EC" id="4.1.1.37" evidence="1"/>
<dbReference type="EMBL" id="CP000509">
    <property type="protein sequence ID" value="ABL83174.1"/>
    <property type="molecule type" value="Genomic_DNA"/>
</dbReference>
<dbReference type="RefSeq" id="WP_011757105.1">
    <property type="nucleotide sequence ID" value="NC_008699.1"/>
</dbReference>
<dbReference type="SMR" id="A1SMY9"/>
<dbReference type="STRING" id="196162.Noca_3674"/>
<dbReference type="KEGG" id="nca:Noca_3674"/>
<dbReference type="eggNOG" id="COG0407">
    <property type="taxonomic scope" value="Bacteria"/>
</dbReference>
<dbReference type="HOGENOM" id="CLU_040933_0_1_11"/>
<dbReference type="OrthoDB" id="9806656at2"/>
<dbReference type="UniPathway" id="UPA00251">
    <property type="reaction ID" value="UER00321"/>
</dbReference>
<dbReference type="Proteomes" id="UP000000640">
    <property type="component" value="Chromosome"/>
</dbReference>
<dbReference type="GO" id="GO:0005829">
    <property type="term" value="C:cytosol"/>
    <property type="evidence" value="ECO:0007669"/>
    <property type="project" value="TreeGrafter"/>
</dbReference>
<dbReference type="GO" id="GO:0004853">
    <property type="term" value="F:uroporphyrinogen decarboxylase activity"/>
    <property type="evidence" value="ECO:0007669"/>
    <property type="project" value="UniProtKB-UniRule"/>
</dbReference>
<dbReference type="GO" id="GO:0006782">
    <property type="term" value="P:protoporphyrinogen IX biosynthetic process"/>
    <property type="evidence" value="ECO:0007669"/>
    <property type="project" value="UniProtKB-UniRule"/>
</dbReference>
<dbReference type="CDD" id="cd00717">
    <property type="entry name" value="URO-D"/>
    <property type="match status" value="1"/>
</dbReference>
<dbReference type="Gene3D" id="3.20.20.210">
    <property type="match status" value="1"/>
</dbReference>
<dbReference type="HAMAP" id="MF_00218">
    <property type="entry name" value="URO_D"/>
    <property type="match status" value="1"/>
</dbReference>
<dbReference type="InterPro" id="IPR038071">
    <property type="entry name" value="UROD/MetE-like_sf"/>
</dbReference>
<dbReference type="InterPro" id="IPR006361">
    <property type="entry name" value="Uroporphyrinogen_deCO2ase_HemE"/>
</dbReference>
<dbReference type="InterPro" id="IPR000257">
    <property type="entry name" value="Uroporphyrinogen_deCOase"/>
</dbReference>
<dbReference type="NCBIfam" id="TIGR01464">
    <property type="entry name" value="hemE"/>
    <property type="match status" value="1"/>
</dbReference>
<dbReference type="PANTHER" id="PTHR21091">
    <property type="entry name" value="METHYLTETRAHYDROFOLATE:HOMOCYSTEINE METHYLTRANSFERASE RELATED"/>
    <property type="match status" value="1"/>
</dbReference>
<dbReference type="PANTHER" id="PTHR21091:SF169">
    <property type="entry name" value="UROPORPHYRINOGEN DECARBOXYLASE"/>
    <property type="match status" value="1"/>
</dbReference>
<dbReference type="Pfam" id="PF01208">
    <property type="entry name" value="URO-D"/>
    <property type="match status" value="1"/>
</dbReference>
<dbReference type="SUPFAM" id="SSF51726">
    <property type="entry name" value="UROD/MetE-like"/>
    <property type="match status" value="1"/>
</dbReference>
<dbReference type="PROSITE" id="PS00906">
    <property type="entry name" value="UROD_1"/>
    <property type="match status" value="1"/>
</dbReference>
<dbReference type="PROSITE" id="PS00907">
    <property type="entry name" value="UROD_2"/>
    <property type="match status" value="1"/>
</dbReference>
<sequence>MTPDPRLADSAFLKAARGEPVPHTPVWYMRQAGRSLPEYLAVREGIGMLESCMDPDLVVEITLQPVRRYGVDAAIFFSDIVLPLKAVGVDLDIKPGVGPVVAHPVRTLADVEAIPDLTPEHVPFITEAVRGLVGELGGTPLIGFAGAPFTVASYLVEGGPSKEHARTKAMMFGAPDVWDALLRKIAGISASYLEVQVAAGASAVQLFDSWAGALTPADYRAFVMPHSARVLERAGALGVPRIHFGVGTANLLGLMGEAGADVVGVDWRTPLAHAIALVGDRGVQGNLDPTLVFAPTEVMTARAAEIVEAGRAARGHIFNLGHGVIPSTDPDQLKRLTEFVQTYPR</sequence>
<gene>
    <name evidence="1" type="primary">hemE</name>
    <name type="ordered locus">Noca_3674</name>
</gene>
<proteinExistence type="inferred from homology"/>
<reference key="1">
    <citation type="submission" date="2006-12" db="EMBL/GenBank/DDBJ databases">
        <title>Complete sequence of chromosome 1 of Nocardioides sp. JS614.</title>
        <authorList>
            <person name="Copeland A."/>
            <person name="Lucas S."/>
            <person name="Lapidus A."/>
            <person name="Barry K."/>
            <person name="Detter J.C."/>
            <person name="Glavina del Rio T."/>
            <person name="Hammon N."/>
            <person name="Israni S."/>
            <person name="Dalin E."/>
            <person name="Tice H."/>
            <person name="Pitluck S."/>
            <person name="Thompson L.S."/>
            <person name="Brettin T."/>
            <person name="Bruce D."/>
            <person name="Han C."/>
            <person name="Tapia R."/>
            <person name="Schmutz J."/>
            <person name="Larimer F."/>
            <person name="Land M."/>
            <person name="Hauser L."/>
            <person name="Kyrpides N."/>
            <person name="Kim E."/>
            <person name="Mattes T."/>
            <person name="Gossett J."/>
            <person name="Richardson P."/>
        </authorList>
    </citation>
    <scope>NUCLEOTIDE SEQUENCE [LARGE SCALE GENOMIC DNA]</scope>
    <source>
        <strain>ATCC BAA-499 / JS614</strain>
    </source>
</reference>
<keyword id="KW-0963">Cytoplasm</keyword>
<keyword id="KW-0210">Decarboxylase</keyword>
<keyword id="KW-0456">Lyase</keyword>
<keyword id="KW-0627">Porphyrin biosynthesis</keyword>
<keyword id="KW-1185">Reference proteome</keyword>
<comment type="function">
    <text evidence="1">Catalyzes the decarboxylation of four acetate groups of uroporphyrinogen-III to yield coproporphyrinogen-III.</text>
</comment>
<comment type="catalytic activity">
    <reaction evidence="1">
        <text>uroporphyrinogen III + 4 H(+) = coproporphyrinogen III + 4 CO2</text>
        <dbReference type="Rhea" id="RHEA:19865"/>
        <dbReference type="ChEBI" id="CHEBI:15378"/>
        <dbReference type="ChEBI" id="CHEBI:16526"/>
        <dbReference type="ChEBI" id="CHEBI:57308"/>
        <dbReference type="ChEBI" id="CHEBI:57309"/>
        <dbReference type="EC" id="4.1.1.37"/>
    </reaction>
</comment>
<comment type="pathway">
    <text evidence="1">Porphyrin-containing compound metabolism; protoporphyrin-IX biosynthesis; coproporphyrinogen-III from 5-aminolevulinate: step 4/4.</text>
</comment>
<comment type="subunit">
    <text evidence="1">Homodimer.</text>
</comment>
<comment type="subcellular location">
    <subcellularLocation>
        <location evidence="1">Cytoplasm</location>
    </subcellularLocation>
</comment>
<comment type="similarity">
    <text evidence="1">Belongs to the uroporphyrinogen decarboxylase family.</text>
</comment>
<organism>
    <name type="scientific">Nocardioides sp. (strain ATCC BAA-499 / JS614)</name>
    <dbReference type="NCBI Taxonomy" id="196162"/>
    <lineage>
        <taxon>Bacteria</taxon>
        <taxon>Bacillati</taxon>
        <taxon>Actinomycetota</taxon>
        <taxon>Actinomycetes</taxon>
        <taxon>Propionibacteriales</taxon>
        <taxon>Nocardioidaceae</taxon>
        <taxon>Nocardioides</taxon>
    </lineage>
</organism>
<feature type="chain" id="PRO_1000058644" description="Uroporphyrinogen decarboxylase">
    <location>
        <begin position="1"/>
        <end position="345"/>
    </location>
</feature>
<feature type="binding site" evidence="1">
    <location>
        <begin position="30"/>
        <end position="34"/>
    </location>
    <ligand>
        <name>substrate</name>
    </ligand>
</feature>
<feature type="binding site" evidence="1">
    <location>
        <position position="79"/>
    </location>
    <ligand>
        <name>substrate</name>
    </ligand>
</feature>
<feature type="binding site" evidence="1">
    <location>
        <position position="154"/>
    </location>
    <ligand>
        <name>substrate</name>
    </ligand>
</feature>
<feature type="binding site" evidence="1">
    <location>
        <position position="209"/>
    </location>
    <ligand>
        <name>substrate</name>
    </ligand>
</feature>
<feature type="binding site" evidence="1">
    <location>
        <position position="322"/>
    </location>
    <ligand>
        <name>substrate</name>
    </ligand>
</feature>
<feature type="site" description="Transition state stabilizer" evidence="1">
    <location>
        <position position="79"/>
    </location>
</feature>
<protein>
    <recommendedName>
        <fullName evidence="1">Uroporphyrinogen decarboxylase</fullName>
        <shortName evidence="1">UPD</shortName>
        <shortName evidence="1">URO-D</shortName>
        <ecNumber evidence="1">4.1.1.37</ecNumber>
    </recommendedName>
</protein>